<gene>
    <name type="ordered locus">YPDSF_1067</name>
</gene>
<feature type="chain" id="PRO_1000045394" description="Probable transcriptional regulatory protein YPDSF_1067">
    <location>
        <begin position="1"/>
        <end position="247"/>
    </location>
</feature>
<evidence type="ECO:0000255" key="1">
    <source>
        <dbReference type="HAMAP-Rule" id="MF_00693"/>
    </source>
</evidence>
<organism>
    <name type="scientific">Yersinia pestis (strain Pestoides F)</name>
    <dbReference type="NCBI Taxonomy" id="386656"/>
    <lineage>
        <taxon>Bacteria</taxon>
        <taxon>Pseudomonadati</taxon>
        <taxon>Pseudomonadota</taxon>
        <taxon>Gammaproteobacteria</taxon>
        <taxon>Enterobacterales</taxon>
        <taxon>Yersiniaceae</taxon>
        <taxon>Yersinia</taxon>
    </lineage>
</organism>
<protein>
    <recommendedName>
        <fullName evidence="1">Probable transcriptional regulatory protein YPDSF_1067</fullName>
    </recommendedName>
</protein>
<reference key="1">
    <citation type="submission" date="2007-02" db="EMBL/GenBank/DDBJ databases">
        <title>Complete sequence of chromosome of Yersinia pestis Pestoides F.</title>
        <authorList>
            <consortium name="US DOE Joint Genome Institute"/>
            <person name="Copeland A."/>
            <person name="Lucas S."/>
            <person name="Lapidus A."/>
            <person name="Barry K."/>
            <person name="Detter J.C."/>
            <person name="Glavina del Rio T."/>
            <person name="Hammon N."/>
            <person name="Israni S."/>
            <person name="Dalin E."/>
            <person name="Tice H."/>
            <person name="Pitluck S."/>
            <person name="Di Bartolo G."/>
            <person name="Chain P."/>
            <person name="Malfatti S."/>
            <person name="Shin M."/>
            <person name="Vergez L."/>
            <person name="Schmutz J."/>
            <person name="Larimer F."/>
            <person name="Land M."/>
            <person name="Hauser L."/>
            <person name="Worsham P."/>
            <person name="Chu M."/>
            <person name="Bearden S."/>
            <person name="Garcia E."/>
            <person name="Richardson P."/>
        </authorList>
    </citation>
    <scope>NUCLEOTIDE SEQUENCE [LARGE SCALE GENOMIC DNA]</scope>
    <source>
        <strain>Pestoides F</strain>
    </source>
</reference>
<proteinExistence type="inferred from homology"/>
<sequence>MAGHSKWANTKHRKAAQDAKRGKIFTKIIRELVTAARLGGGDPGANPRLRAAIDKALSNNMTRDTLNRAIARGVGGDEDNNMETIIYEGYGPGGTAVMVECLSDNRNRTVSEVRHAFTKTGGNLGTDGSVSYLFTKKGVISYAPGLEEDTVMDAALEAGADDIVVYDDGAIDVFTAWESLGAVKDALDATGLVAEGAEVSLIPSTKAELDAETAPKLLRLIDMLEDSDDVQEVYHNGEISDEVAATL</sequence>
<comment type="subcellular location">
    <subcellularLocation>
        <location evidence="1">Cytoplasm</location>
    </subcellularLocation>
</comment>
<comment type="similarity">
    <text evidence="1">Belongs to the TACO1 family.</text>
</comment>
<name>Y1067_YERPP</name>
<keyword id="KW-0963">Cytoplasm</keyword>
<keyword id="KW-0238">DNA-binding</keyword>
<keyword id="KW-0804">Transcription</keyword>
<keyword id="KW-0805">Transcription regulation</keyword>
<dbReference type="EMBL" id="CP000668">
    <property type="protein sequence ID" value="ABP39465.1"/>
    <property type="molecule type" value="Genomic_DNA"/>
</dbReference>
<dbReference type="RefSeq" id="WP_002211202.1">
    <property type="nucleotide sequence ID" value="NZ_CP009715.1"/>
</dbReference>
<dbReference type="SMR" id="A4TJK3"/>
<dbReference type="KEGG" id="ypp:YPDSF_1067"/>
<dbReference type="PATRIC" id="fig|386656.14.peg.2766"/>
<dbReference type="GO" id="GO:0005829">
    <property type="term" value="C:cytosol"/>
    <property type="evidence" value="ECO:0007669"/>
    <property type="project" value="TreeGrafter"/>
</dbReference>
<dbReference type="GO" id="GO:0003677">
    <property type="term" value="F:DNA binding"/>
    <property type="evidence" value="ECO:0007669"/>
    <property type="project" value="UniProtKB-UniRule"/>
</dbReference>
<dbReference type="GO" id="GO:0006355">
    <property type="term" value="P:regulation of DNA-templated transcription"/>
    <property type="evidence" value="ECO:0007669"/>
    <property type="project" value="UniProtKB-UniRule"/>
</dbReference>
<dbReference type="FunFam" id="1.10.10.200:FF:000001">
    <property type="entry name" value="Probable transcriptional regulatory protein YebC"/>
    <property type="match status" value="1"/>
</dbReference>
<dbReference type="FunFam" id="3.30.70.980:FF:000002">
    <property type="entry name" value="Probable transcriptional regulatory protein YebC"/>
    <property type="match status" value="1"/>
</dbReference>
<dbReference type="Gene3D" id="1.10.10.200">
    <property type="match status" value="1"/>
</dbReference>
<dbReference type="Gene3D" id="3.30.70.980">
    <property type="match status" value="2"/>
</dbReference>
<dbReference type="HAMAP" id="MF_00693">
    <property type="entry name" value="Transcrip_reg_TACO1"/>
    <property type="match status" value="1"/>
</dbReference>
<dbReference type="InterPro" id="IPR017856">
    <property type="entry name" value="Integrase-like_N"/>
</dbReference>
<dbReference type="InterPro" id="IPR048300">
    <property type="entry name" value="TACO1_YebC-like_2nd/3rd_dom"/>
</dbReference>
<dbReference type="InterPro" id="IPR049083">
    <property type="entry name" value="TACO1_YebC_N"/>
</dbReference>
<dbReference type="InterPro" id="IPR002876">
    <property type="entry name" value="Transcrip_reg_TACO1-like"/>
</dbReference>
<dbReference type="InterPro" id="IPR026564">
    <property type="entry name" value="Transcrip_reg_TACO1-like_dom3"/>
</dbReference>
<dbReference type="InterPro" id="IPR029072">
    <property type="entry name" value="YebC-like"/>
</dbReference>
<dbReference type="NCBIfam" id="NF001030">
    <property type="entry name" value="PRK00110.1"/>
    <property type="match status" value="1"/>
</dbReference>
<dbReference type="NCBIfam" id="NF009044">
    <property type="entry name" value="PRK12378.1"/>
    <property type="match status" value="1"/>
</dbReference>
<dbReference type="NCBIfam" id="TIGR01033">
    <property type="entry name" value="YebC/PmpR family DNA-binding transcriptional regulator"/>
    <property type="match status" value="1"/>
</dbReference>
<dbReference type="PANTHER" id="PTHR12532:SF6">
    <property type="entry name" value="TRANSCRIPTIONAL REGULATORY PROTEIN YEBC-RELATED"/>
    <property type="match status" value="1"/>
</dbReference>
<dbReference type="PANTHER" id="PTHR12532">
    <property type="entry name" value="TRANSLATIONAL ACTIVATOR OF CYTOCHROME C OXIDASE 1"/>
    <property type="match status" value="1"/>
</dbReference>
<dbReference type="Pfam" id="PF20772">
    <property type="entry name" value="TACO1_YebC_N"/>
    <property type="match status" value="1"/>
</dbReference>
<dbReference type="Pfam" id="PF01709">
    <property type="entry name" value="Transcrip_reg"/>
    <property type="match status" value="1"/>
</dbReference>
<dbReference type="SUPFAM" id="SSF75625">
    <property type="entry name" value="YebC-like"/>
    <property type="match status" value="1"/>
</dbReference>
<accession>A4TJK3</accession>